<dbReference type="EC" id="3.1.1.111" evidence="4"/>
<dbReference type="EC" id="3.1.1.4" evidence="5"/>
<dbReference type="EMBL" id="EU180219">
    <property type="protein sequence ID" value="ABW23572.1"/>
    <property type="molecule type" value="mRNA"/>
</dbReference>
<dbReference type="EMBL" id="BX284602">
    <property type="protein sequence ID" value="CCD70559.1"/>
    <property type="molecule type" value="Genomic_DNA"/>
</dbReference>
<dbReference type="EMBL" id="BX284602">
    <property type="protein sequence ID" value="CCD70557.1"/>
    <property type="molecule type" value="Genomic_DNA"/>
</dbReference>
<dbReference type="EMBL" id="BX284602">
    <property type="protein sequence ID" value="CCD70558.1"/>
    <property type="molecule type" value="Genomic_DNA"/>
</dbReference>
<dbReference type="EMBL" id="BX284602">
    <property type="protein sequence ID" value="CCD70553.1"/>
    <property type="molecule type" value="Genomic_DNA"/>
</dbReference>
<dbReference type="EMBL" id="BX284602">
    <property type="protein sequence ID" value="CCD70552.1"/>
    <property type="molecule type" value="Genomic_DNA"/>
</dbReference>
<dbReference type="EMBL" id="BX284602">
    <property type="protein sequence ID" value="CTQ86513.1"/>
    <property type="molecule type" value="Genomic_DNA"/>
</dbReference>
<dbReference type="PIR" id="T29582">
    <property type="entry name" value="T29582"/>
</dbReference>
<dbReference type="RefSeq" id="NP_001040793.1">
    <molecule id="G5EEM9-2"/>
    <property type="nucleotide sequence ID" value="NM_001047328.5"/>
</dbReference>
<dbReference type="RefSeq" id="NP_001040794.1">
    <molecule id="G5EEM9-3"/>
    <property type="nucleotide sequence ID" value="NM_001047329.4"/>
</dbReference>
<dbReference type="RefSeq" id="NP_001122623.1">
    <property type="nucleotide sequence ID" value="NM_001129151.2"/>
</dbReference>
<dbReference type="RefSeq" id="NP_001300574.1">
    <molecule id="G5EEM9-6"/>
    <property type="nucleotide sequence ID" value="NM_001313645.3"/>
</dbReference>
<dbReference type="RefSeq" id="NP_001367816.1">
    <molecule id="G5EEM9-4"/>
    <property type="nucleotide sequence ID" value="NM_001381395.3"/>
</dbReference>
<dbReference type="RefSeq" id="NP_001367817.1">
    <molecule id="G5EEM9-1"/>
    <property type="nucleotide sequence ID" value="NM_001381394.1"/>
</dbReference>
<dbReference type="RefSeq" id="NP_740975.1">
    <property type="nucleotide sequence ID" value="NM_170978.5"/>
</dbReference>
<dbReference type="RefSeq" id="NP_740976.1">
    <molecule id="G5EEM9-5"/>
    <property type="nucleotide sequence ID" value="NM_170979.6"/>
</dbReference>
<dbReference type="FunCoup" id="G5EEM9">
    <property type="interactions" value="1786"/>
</dbReference>
<dbReference type="STRING" id="6239.M03A1.6e.1"/>
<dbReference type="SwissLipids" id="SLP:000001014"/>
<dbReference type="PaxDb" id="6239-M03A1.6e"/>
<dbReference type="PeptideAtlas" id="G5EEM9"/>
<dbReference type="EnsemblMetazoa" id="M03A1.6a.1">
    <molecule id="G5EEM9-5"/>
    <property type="protein sequence ID" value="M03A1.6a.1"/>
    <property type="gene ID" value="WBGene00019747"/>
</dbReference>
<dbReference type="EnsemblMetazoa" id="M03A1.6b.1">
    <molecule id="G5EEM9-4"/>
    <property type="protein sequence ID" value="M03A1.6b.1"/>
    <property type="gene ID" value="WBGene00019747"/>
</dbReference>
<dbReference type="EnsemblMetazoa" id="M03A1.6b.2">
    <molecule id="G5EEM9-4"/>
    <property type="protein sequence ID" value="M03A1.6b.2"/>
    <property type="gene ID" value="WBGene00019747"/>
</dbReference>
<dbReference type="EnsemblMetazoa" id="M03A1.6b.3">
    <molecule id="G5EEM9-4"/>
    <property type="protein sequence ID" value="M03A1.6b.3"/>
    <property type="gene ID" value="WBGene00019747"/>
</dbReference>
<dbReference type="EnsemblMetazoa" id="M03A1.6b.4">
    <molecule id="G5EEM9-4"/>
    <property type="protein sequence ID" value="M03A1.6b.4"/>
    <property type="gene ID" value="WBGene00019747"/>
</dbReference>
<dbReference type="EnsemblMetazoa" id="M03A1.6c.1">
    <molecule id="G5EEM9-2"/>
    <property type="protein sequence ID" value="M03A1.6c.1"/>
    <property type="gene ID" value="WBGene00019747"/>
</dbReference>
<dbReference type="EnsemblMetazoa" id="M03A1.6d.1">
    <molecule id="G5EEM9-3"/>
    <property type="protein sequence ID" value="M03A1.6d.1"/>
    <property type="gene ID" value="WBGene00019747"/>
</dbReference>
<dbReference type="EnsemblMetazoa" id="M03A1.6e.1">
    <molecule id="G5EEM9-1"/>
    <property type="protein sequence ID" value="M03A1.6e.1"/>
    <property type="gene ID" value="WBGene00019747"/>
</dbReference>
<dbReference type="EnsemblMetazoa" id="M03A1.6f.1">
    <molecule id="G5EEM9-6"/>
    <property type="protein sequence ID" value="M03A1.6f.1"/>
    <property type="gene ID" value="WBGene00019747"/>
</dbReference>
<dbReference type="GeneID" id="173795"/>
<dbReference type="KEGG" id="cel:CELE_M03A1.6"/>
<dbReference type="UCSC" id="M03A1.6c">
    <property type="organism name" value="c. elegans"/>
</dbReference>
<dbReference type="AGR" id="WB:WBGene00019747"/>
<dbReference type="CTD" id="173795"/>
<dbReference type="WormBase" id="M03A1.6a">
    <molecule id="G5EEM9-5"/>
    <property type="protein sequence ID" value="CE07393"/>
    <property type="gene ID" value="WBGene00019747"/>
    <property type="gene designation" value="ipla-1"/>
</dbReference>
<dbReference type="WormBase" id="M03A1.6b">
    <molecule id="G5EEM9-4"/>
    <property type="protein sequence ID" value="CE29816"/>
    <property type="gene ID" value="WBGene00019747"/>
    <property type="gene designation" value="ipla-1"/>
</dbReference>
<dbReference type="WormBase" id="M03A1.6c">
    <molecule id="G5EEM9-2"/>
    <property type="protein sequence ID" value="CE40099"/>
    <property type="gene ID" value="WBGene00019747"/>
    <property type="gene designation" value="ipla-1"/>
</dbReference>
<dbReference type="WormBase" id="M03A1.6d">
    <molecule id="G5EEM9-3"/>
    <property type="protein sequence ID" value="CE40100"/>
    <property type="gene ID" value="WBGene00019747"/>
    <property type="gene designation" value="ipla-1"/>
</dbReference>
<dbReference type="WormBase" id="M03A1.6e">
    <molecule id="G5EEM9-1"/>
    <property type="protein sequence ID" value="CE41917"/>
    <property type="gene ID" value="WBGene00019747"/>
    <property type="gene designation" value="ipla-1"/>
</dbReference>
<dbReference type="WormBase" id="M03A1.6f">
    <molecule id="G5EEM9-6"/>
    <property type="protein sequence ID" value="CE50406"/>
    <property type="gene ID" value="WBGene00019747"/>
    <property type="gene designation" value="ipla-1"/>
</dbReference>
<dbReference type="eggNOG" id="KOG2308">
    <property type="taxonomic scope" value="Eukaryota"/>
</dbReference>
<dbReference type="GeneTree" id="ENSGT00940000156065"/>
<dbReference type="HOGENOM" id="CLU_006932_2_0_1"/>
<dbReference type="InParanoid" id="G5EEM9"/>
<dbReference type="OMA" id="DNKKSWW"/>
<dbReference type="OrthoDB" id="431378at2759"/>
<dbReference type="PhylomeDB" id="G5EEM9"/>
<dbReference type="PRO" id="PR:G5EEM9"/>
<dbReference type="Proteomes" id="UP000001940">
    <property type="component" value="Chromosome II"/>
</dbReference>
<dbReference type="Bgee" id="WBGene00019747">
    <property type="expression patterns" value="Expressed in germ line (C elegans) and 4 other cell types or tissues"/>
</dbReference>
<dbReference type="ExpressionAtlas" id="G5EEM9">
    <property type="expression patterns" value="baseline and differential"/>
</dbReference>
<dbReference type="GO" id="GO:0005737">
    <property type="term" value="C:cytoplasm"/>
    <property type="evidence" value="ECO:0000318"/>
    <property type="project" value="GO_Central"/>
</dbReference>
<dbReference type="GO" id="GO:0005829">
    <property type="term" value="C:cytosol"/>
    <property type="evidence" value="ECO:0000314"/>
    <property type="project" value="WormBase"/>
</dbReference>
<dbReference type="GO" id="GO:0005783">
    <property type="term" value="C:endoplasmic reticulum"/>
    <property type="evidence" value="ECO:0000314"/>
    <property type="project" value="WormBase"/>
</dbReference>
<dbReference type="GO" id="GO:0005634">
    <property type="term" value="C:nucleus"/>
    <property type="evidence" value="ECO:0000314"/>
    <property type="project" value="WormBase"/>
</dbReference>
<dbReference type="GO" id="GO:1903293">
    <property type="term" value="C:phosphatase complex"/>
    <property type="evidence" value="ECO:0000353"/>
    <property type="project" value="WormBase"/>
</dbReference>
<dbReference type="GO" id="GO:0047499">
    <property type="term" value="F:calcium-independent phospholipase A2 activity"/>
    <property type="evidence" value="ECO:0000314"/>
    <property type="project" value="WormBase"/>
</dbReference>
<dbReference type="GO" id="GO:0042802">
    <property type="term" value="F:identical protein binding"/>
    <property type="evidence" value="ECO:0000353"/>
    <property type="project" value="WormBase"/>
</dbReference>
<dbReference type="GO" id="GO:0046872">
    <property type="term" value="F:metal ion binding"/>
    <property type="evidence" value="ECO:0007669"/>
    <property type="project" value="InterPro"/>
</dbReference>
<dbReference type="GO" id="GO:0070300">
    <property type="term" value="F:phosphatidic acid binding"/>
    <property type="evidence" value="ECO:0000314"/>
    <property type="project" value="WormBase"/>
</dbReference>
<dbReference type="GO" id="GO:0005546">
    <property type="term" value="F:phosphatidylinositol-4,5-bisphosphate binding"/>
    <property type="evidence" value="ECO:0000314"/>
    <property type="project" value="WormBase"/>
</dbReference>
<dbReference type="GO" id="GO:0070273">
    <property type="term" value="F:phosphatidylinositol-4-phosphate binding"/>
    <property type="evidence" value="ECO:0000314"/>
    <property type="project" value="WormBase"/>
</dbReference>
<dbReference type="GO" id="GO:0001786">
    <property type="term" value="F:phosphatidylserine binding"/>
    <property type="evidence" value="ECO:0000314"/>
    <property type="project" value="WormBase"/>
</dbReference>
<dbReference type="GO" id="GO:0008970">
    <property type="term" value="F:phospholipase A1 activity"/>
    <property type="evidence" value="ECO:0000314"/>
    <property type="project" value="WormBase"/>
</dbReference>
<dbReference type="GO" id="GO:0004620">
    <property type="term" value="F:phospholipase activity"/>
    <property type="evidence" value="ECO:0000318"/>
    <property type="project" value="GO_Central"/>
</dbReference>
<dbReference type="GO" id="GO:0034638">
    <property type="term" value="P:phosphatidylcholine catabolic process"/>
    <property type="evidence" value="ECO:0000314"/>
    <property type="project" value="WormBase"/>
</dbReference>
<dbReference type="GO" id="GO:0031161">
    <property type="term" value="P:phosphatidylinositol catabolic process"/>
    <property type="evidence" value="ECO:0000250"/>
    <property type="project" value="WormBase"/>
</dbReference>
<dbReference type="GO" id="GO:0046488">
    <property type="term" value="P:phosphatidylinositol metabolic process"/>
    <property type="evidence" value="ECO:0000314"/>
    <property type="project" value="WormBase"/>
</dbReference>
<dbReference type="GO" id="GO:0009786">
    <property type="term" value="P:regulation of asymmetric cell division"/>
    <property type="evidence" value="ECO:0000315"/>
    <property type="project" value="WormBase"/>
</dbReference>
<dbReference type="GO" id="GO:0032880">
    <property type="term" value="P:regulation of protein localization"/>
    <property type="evidence" value="ECO:0000315"/>
    <property type="project" value="WormBase"/>
</dbReference>
<dbReference type="InterPro" id="IPR029058">
    <property type="entry name" value="AB_hydrolase_fold"/>
</dbReference>
<dbReference type="InterPro" id="IPR004177">
    <property type="entry name" value="DDHD_dom"/>
</dbReference>
<dbReference type="PANTHER" id="PTHR23509:SF48">
    <property type="entry name" value="INTRACELLULAR PHOSPHOLIPASE A1"/>
    <property type="match status" value="1"/>
</dbReference>
<dbReference type="PANTHER" id="PTHR23509">
    <property type="entry name" value="PA-PL1 PHOSPHOLIPASE FAMILY"/>
    <property type="match status" value="1"/>
</dbReference>
<dbReference type="Pfam" id="PF02862">
    <property type="entry name" value="DDHD"/>
    <property type="match status" value="1"/>
</dbReference>
<dbReference type="SMART" id="SM01127">
    <property type="entry name" value="DDHD"/>
    <property type="match status" value="1"/>
</dbReference>
<dbReference type="SUPFAM" id="SSF53474">
    <property type="entry name" value="alpha/beta-Hydrolases"/>
    <property type="match status" value="1"/>
</dbReference>
<dbReference type="PROSITE" id="PS51043">
    <property type="entry name" value="DDHD"/>
    <property type="match status" value="1"/>
</dbReference>
<organism>
    <name type="scientific">Caenorhabditis elegans</name>
    <dbReference type="NCBI Taxonomy" id="6239"/>
    <lineage>
        <taxon>Eukaryota</taxon>
        <taxon>Metazoa</taxon>
        <taxon>Ecdysozoa</taxon>
        <taxon>Nematoda</taxon>
        <taxon>Chromadorea</taxon>
        <taxon>Rhabditida</taxon>
        <taxon>Rhabditina</taxon>
        <taxon>Rhabditomorpha</taxon>
        <taxon>Rhabditoidea</taxon>
        <taxon>Rhabditidae</taxon>
        <taxon>Peloderinae</taxon>
        <taxon>Caenorhabditis</taxon>
    </lineage>
</organism>
<reference key="1">
    <citation type="journal article" date="2008" name="EMBO J.">
        <title>Beta-catenin asymmetry is regulated by PLA1 and retrograde traffic in C. elegans stem cell divisions.</title>
        <authorList>
            <person name="Kanamori T."/>
            <person name="Inoue T."/>
            <person name="Sakamoto T."/>
            <person name="Gengyo-Ando K."/>
            <person name="Tsujimoto M."/>
            <person name="Mitani S."/>
            <person name="Sawa H."/>
            <person name="Aoki J."/>
            <person name="Arai H."/>
        </authorList>
    </citation>
    <scope>NUCLEOTIDE SEQUENCE [MRNA]</scope>
    <scope>FUNCTION</scope>
</reference>
<reference key="2">
    <citation type="journal article" date="1998" name="Science">
        <title>Genome sequence of the nematode C. elegans: a platform for investigating biology.</title>
        <authorList>
            <consortium name="The C. elegans sequencing consortium"/>
        </authorList>
    </citation>
    <scope>NUCLEOTIDE SEQUENCE [LARGE SCALE GENOMIC DNA]</scope>
    <source>
        <strain>Bristol N2</strain>
    </source>
</reference>
<reference key="3">
    <citation type="journal article" date="2010" name="Mol. Biol. Cell">
        <title>Intracellular phospholipase A1 and acyltransferase, which are involved in Caenorhabditis elegans stem cell divisions, determine the sn-1 fatty acyl chain of phosphatidylinositol.</title>
        <authorList>
            <person name="Imae R."/>
            <person name="Inoue T."/>
            <person name="Kimura M."/>
            <person name="Kanamori T."/>
            <person name="Tomioka N.H."/>
            <person name="Kage-Nakadai E."/>
            <person name="Mitani S."/>
            <person name="Arai H."/>
        </authorList>
    </citation>
    <scope>FUNCTION</scope>
    <scope>CATALYTIC ACTIVITY</scope>
</reference>
<reference key="4">
    <citation type="journal article" date="2012" name="J. Biol. Chem.">
        <title>Roles of acidic phospholipids and nucleotides in regulating membrane binding and activity of a calcium-independent phospholipase A2 isoform.</title>
        <authorList>
            <person name="Morrison K."/>
            <person name="Witte K."/>
            <person name="Mayers J.R."/>
            <person name="Schuh A.L."/>
            <person name="Audhya A."/>
        </authorList>
    </citation>
    <scope>FUNCTION</scope>
    <scope>CATALYTIC ACTIVITY</scope>
    <scope>ACTIVITY REGULATION</scope>
</reference>
<gene>
    <name evidence="11 12" type="primary">ipla-1</name>
    <name evidence="12" type="ORF">M03A1.6</name>
</gene>
<name>PLA1_CAEEL</name>
<accession>G5EEM9</accession>
<accession>A0A0K3AU10</accession>
<accession>G4SGS5</accession>
<accession>G4SGU1</accession>
<accession>G5EE61</accession>
<accession>G8JYA8</accession>
<accession>Q21478</accession>
<accession>Q8WQE0</accession>
<feature type="chain" id="PRO_0000452653" description="Intracellular phospholipase A1">
    <location>
        <begin position="1"/>
        <end position="840"/>
    </location>
</feature>
<feature type="domain" description="DDHD" evidence="1">
    <location>
        <begin position="564"/>
        <end position="827"/>
    </location>
</feature>
<feature type="region of interest" description="Disordered" evidence="2">
    <location>
        <begin position="1"/>
        <end position="142"/>
    </location>
</feature>
<feature type="region of interest" description="Disordered" evidence="2">
    <location>
        <begin position="666"/>
        <end position="718"/>
    </location>
</feature>
<feature type="compositionally biased region" description="Basic and acidic residues" evidence="2">
    <location>
        <begin position="26"/>
        <end position="39"/>
    </location>
</feature>
<feature type="compositionally biased region" description="Low complexity" evidence="2">
    <location>
        <begin position="97"/>
        <end position="111"/>
    </location>
</feature>
<feature type="compositionally biased region" description="Basic and acidic residues" evidence="2">
    <location>
        <begin position="668"/>
        <end position="680"/>
    </location>
</feature>
<feature type="compositionally biased region" description="Acidic residues" evidence="2">
    <location>
        <begin position="681"/>
        <end position="694"/>
    </location>
</feature>
<feature type="splice variant" id="VSP_061032" description="In isoform f.">
    <location>
        <begin position="1"/>
        <end position="172"/>
    </location>
</feature>
<feature type="splice variant" id="VSP_061033" description="In isoform a.">
    <original>MSGSEEEHLVSLTFRKNEEDMDEDEGKVKQKEKPKEKQMEFVNQNFVESTEDESEVSTPTAVGLPIGTSTPDGDETPTQPDPNGKYTMAQTKDADLSRPSGLPSNGNPGSSTTVPPASKSGPVAPPRPSGTPVAPQRNRRR</original>
    <variation>MEKSPPTSPTPIPSIDSNFMISPKKSRSKSVPNARKILNDLVETTERNLEAPYRSIMWQKYIFDRP</variation>
    <location>
        <begin position="1"/>
        <end position="141"/>
    </location>
</feature>
<feature type="splice variant" id="VSP_061034" description="In isoform b.">
    <location>
        <begin position="1"/>
        <end position="87"/>
    </location>
</feature>
<feature type="splice variant" id="VSP_061035" description="In isoform d.">
    <original>MSGSEEEHLVSLTFRKNEEDMDEDEGKVKQKEKPKEKQMEFVNQNFVESTEDESEVSTPTAVGLPIGTSTPDGDETPT</original>
    <variation>MNIMFPEISAFSHYL</variation>
    <location>
        <begin position="1"/>
        <end position="78"/>
    </location>
</feature>
<feature type="splice variant" id="VSP_061036" description="In isoform c.">
    <original>MSGSEEEHLVSLTFRKNEEDMDEDEGKVKQKEKPKEKQMEFVNQNFVESTEDESEVSTPTAVGLPIGTSTPDGDETP</original>
    <variation>MVLGKKKVSRATKSDD</variation>
    <location>
        <begin position="1"/>
        <end position="77"/>
    </location>
</feature>
<sequence length="840" mass="94811">MSGSEEEHLVSLTFRKNEEDMDEDEGKVKQKEKPKEKQMEFVNQNFVESTEDESEVSTPTAVGLPIGTSTPDGDETPTQPDPNGKYTMAQTKDADLSRPSGLPSNGNPGSSTTVPPASKSGPVAPPRPSGTPVAPQRNRRRKVTELKCSEVRWFFQEPKGTLWNPFNGRDSIMLEIKYRKEKGIELDEAMQEIYDESLTHYKMEMKDEPEIENGNIGMEQEKPMVVVMNGQYKVNKDNSKIDPIYWKDDSKEIRRGSWFSPDYQPLEMPLSDQIEKNHLQCFRNQMIPEGTTVFSKSETSNKPVLAELHVDGYDIRWSSVIDISLHQKGNAILRYLWAKSTPLRRGYEKEADWNDAAAEISHLILVVHGIGQKGYENLIAQNANQVRDGVVSAMEKVYPEEKSRPMFLPVEWRSALKLDNGLTDNITIPKMSSMRASLNSTAMDVMYYQSPLFRTEIVRGVVSQLNRTYKLFKANNPQFNGHVSVFGHSLGSVICYDVLTQYSPLMLFDKYVTKSIDEYLKRDDTNASEEARKALEAMKLAREQLRDNLEGGIHKLLVTKEEQLEFKVKYLFAVGSPLGVFLTMRGGESTDLLSKATNVERVFNIFHPYDPVAYRLEPFFAPEYRHIRPIKLFSNTDLRARASYENLPLDVYKHYLKKLKNLNKAKKNKDDKTADARSGGDDENEDEDECDSDEDARSGCSSPRSMTPPPFETAAANAAAAAKETKAVKKGWFSFGTSSNPKKTQSTASLGSVNATSTENIEFAKEAAEELPLAEKILGSGVRVPHRIDFQLQPALTEKSYWSVLKSHFAYWTNADLALFLANVLYCKPLKPEEAKPTWA</sequence>
<proteinExistence type="evidence at protein level"/>
<keyword id="KW-0025">Alternative splicing</keyword>
<keyword id="KW-0378">Hydrolase</keyword>
<keyword id="KW-0443">Lipid metabolism</keyword>
<keyword id="KW-1208">Phospholipid metabolism</keyword>
<keyword id="KW-1185">Reference proteome</keyword>
<protein>
    <recommendedName>
        <fullName evidence="6">Intracellular phospholipase A1</fullName>
        <shortName evidence="7">IPLA-1</shortName>
        <shortName evidence="6">PLA(1)</shortName>
        <ecNumber evidence="4">3.1.1.111</ecNumber>
        <ecNumber evidence="5">3.1.1.4</ecNumber>
    </recommendedName>
</protein>
<evidence type="ECO:0000255" key="1">
    <source>
        <dbReference type="PROSITE-ProRule" id="PRU00378"/>
    </source>
</evidence>
<evidence type="ECO:0000256" key="2">
    <source>
        <dbReference type="SAM" id="MobiDB-lite"/>
    </source>
</evidence>
<evidence type="ECO:0000269" key="3">
    <source>
    </source>
</evidence>
<evidence type="ECO:0000269" key="4">
    <source>
    </source>
</evidence>
<evidence type="ECO:0000269" key="5">
    <source>
    </source>
</evidence>
<evidence type="ECO:0000303" key="6">
    <source>
    </source>
</evidence>
<evidence type="ECO:0000303" key="7">
    <source>
    </source>
</evidence>
<evidence type="ECO:0000305" key="8"/>
<evidence type="ECO:0000305" key="9">
    <source>
    </source>
</evidence>
<evidence type="ECO:0000305" key="10">
    <source>
    </source>
</evidence>
<evidence type="ECO:0000312" key="11">
    <source>
        <dbReference type="EMBL" id="ABW23572.1"/>
    </source>
</evidence>
<evidence type="ECO:0000312" key="12">
    <source>
        <dbReference type="WormBase" id="M03A1.6e"/>
    </source>
</evidence>
<comment type="function">
    <text evidence="3 4 5">Hydrolyzes the ester bond at the sn-1 position of glycerophospholipids and produces 2-acyl lysophospholipids, being phosphatidylinositol (PI) its major substrate. PI is a versatile lipid that not only serves as a structural component of cellular membranes, but also plays important roles in signal transduction through distinct phosphorylated derivatives of the inositol head group (PubMed:20668164). Catalyzes the hydrolysis of phosphatidylcholine at sn-2 position in vitro (PubMed:23007400). Regulates asymmetric division, an important property of stem cells in C.elegans, by controlling the subcellular localizations of beta-catenin (PubMed:18497747, PubMed:20668164).</text>
</comment>
<comment type="catalytic activity">
    <reaction evidence="9">
        <text>1,2-dihexadecanoyl-sn-glycero-3-phospho-(1D-myo-inositol) + H2O = 2-hexadecanoyl-sn-glycero-3-phospho-(1D-myo-inositol) + hexadecanoate + H(+)</text>
        <dbReference type="Rhea" id="RHEA:66708"/>
        <dbReference type="ChEBI" id="CHEBI:7896"/>
        <dbReference type="ChEBI" id="CHEBI:15377"/>
        <dbReference type="ChEBI" id="CHEBI:15378"/>
        <dbReference type="ChEBI" id="CHEBI:72835"/>
        <dbReference type="ChEBI" id="CHEBI:167448"/>
    </reaction>
    <physiologicalReaction direction="left-to-right" evidence="9">
        <dbReference type="Rhea" id="RHEA:66709"/>
    </physiologicalReaction>
</comment>
<comment type="catalytic activity">
    <reaction evidence="4">
        <text>a 1,2-diacyl-sn-glycero-3-phospho-L-serine + H2O = a 2-acyl-sn-glycero-3-phospho-L-serine + a fatty acid + H(+)</text>
        <dbReference type="Rhea" id="RHEA:42212"/>
        <dbReference type="ChEBI" id="CHEBI:15377"/>
        <dbReference type="ChEBI" id="CHEBI:15378"/>
        <dbReference type="ChEBI" id="CHEBI:28868"/>
        <dbReference type="ChEBI" id="CHEBI:57262"/>
        <dbReference type="ChEBI" id="CHEBI:65214"/>
        <dbReference type="EC" id="3.1.1.111"/>
    </reaction>
    <physiologicalReaction direction="left-to-right" evidence="9">
        <dbReference type="Rhea" id="RHEA:42213"/>
    </physiologicalReaction>
</comment>
<comment type="catalytic activity">
    <reaction evidence="4">
        <text>1-hexadecanoyl-2-(9Z-octadecenoyl)-sn-glycero-3-phospho-L-serine + H2O = 2-(9Z-octadecenoyl)-sn-glycero-3-phospho-L-serine + hexadecanoate + H(+)</text>
        <dbReference type="Rhea" id="RHEA:43968"/>
        <dbReference type="ChEBI" id="CHEBI:7896"/>
        <dbReference type="ChEBI" id="CHEBI:15377"/>
        <dbReference type="ChEBI" id="CHEBI:15378"/>
        <dbReference type="ChEBI" id="CHEBI:75029"/>
        <dbReference type="ChEBI" id="CHEBI:77342"/>
    </reaction>
    <physiologicalReaction direction="left-to-right" evidence="9">
        <dbReference type="Rhea" id="RHEA:43969"/>
    </physiologicalReaction>
</comment>
<comment type="catalytic activity">
    <reaction evidence="4">
        <text>1,2-di-(9Z-octadecenoyl)-sn-glycero-3-phosphocholine + H2O = (9Z-octadecenoyl)-sn-glycero-3-phosphocholine + (9Z)-octadecenoate + H(+)</text>
        <dbReference type="Rhea" id="RHEA:38699"/>
        <dbReference type="ChEBI" id="CHEBI:15377"/>
        <dbReference type="ChEBI" id="CHEBI:15378"/>
        <dbReference type="ChEBI" id="CHEBI:30823"/>
        <dbReference type="ChEBI" id="CHEBI:74669"/>
        <dbReference type="ChEBI" id="CHEBI:76083"/>
    </reaction>
    <physiologicalReaction direction="left-to-right" evidence="9">
        <dbReference type="Rhea" id="RHEA:38700"/>
    </physiologicalReaction>
</comment>
<comment type="catalytic activity">
    <reaction evidence="5">
        <text>a 1,2-diacyl-sn-glycero-3-phosphocholine + H2O = a 1-acyl-sn-glycero-3-phosphocholine + a fatty acid + H(+)</text>
        <dbReference type="Rhea" id="RHEA:15801"/>
        <dbReference type="ChEBI" id="CHEBI:15377"/>
        <dbReference type="ChEBI" id="CHEBI:15378"/>
        <dbReference type="ChEBI" id="CHEBI:28868"/>
        <dbReference type="ChEBI" id="CHEBI:57643"/>
        <dbReference type="ChEBI" id="CHEBI:58168"/>
        <dbReference type="EC" id="3.1.1.4"/>
    </reaction>
    <physiologicalReaction direction="left-to-right" evidence="10">
        <dbReference type="Rhea" id="RHEA:15802"/>
    </physiologicalReaction>
</comment>
<comment type="catalytic activity">
    <reaction evidence="5">
        <text>1,2-dihexadecanoyl-sn-glycero-3-phosphocholine + H2O = 1-hexadecanoyl-sn-glycero-3-phosphocholine + hexadecanoate + H(+)</text>
        <dbReference type="Rhea" id="RHEA:41223"/>
        <dbReference type="ChEBI" id="CHEBI:7896"/>
        <dbReference type="ChEBI" id="CHEBI:15377"/>
        <dbReference type="ChEBI" id="CHEBI:15378"/>
        <dbReference type="ChEBI" id="CHEBI:72998"/>
        <dbReference type="ChEBI" id="CHEBI:72999"/>
    </reaction>
    <physiologicalReaction direction="left-to-right" evidence="10">
        <dbReference type="Rhea" id="RHEA:41224"/>
    </physiologicalReaction>
</comment>
<comment type="activity regulation">
    <text evidence="5">Inhibited by E-6-bromomethylene-3-1-naphthalenyl-2H-tetrahydropyran-2-one (BEL) in vitro.</text>
</comment>
<comment type="alternative products">
    <event type="alternative splicing"/>
    <isoform>
        <id>G5EEM9-1</id>
        <name>e</name>
        <sequence type="displayed"/>
    </isoform>
    <isoform>
        <id>G5EEM9-2</id>
        <name>c</name>
        <sequence type="described" ref="VSP_061036"/>
    </isoform>
    <isoform>
        <id>G5EEM9-3</id>
        <name>d</name>
        <sequence type="described" ref="VSP_061035"/>
    </isoform>
    <isoform>
        <id>G5EEM9-4</id>
        <name>b</name>
        <sequence type="described" ref="VSP_061034"/>
    </isoform>
    <isoform>
        <id>G5EEM9-5</id>
        <name>a</name>
        <sequence type="described" ref="VSP_061033"/>
    </isoform>
    <isoform>
        <id>G5EEM9-6</id>
        <name>f</name>
        <sequence type="described" ref="VSP_061032"/>
    </isoform>
</comment>
<comment type="similarity">
    <text evidence="8">Belongs to the PA-PLA1 family.</text>
</comment>